<organism>
    <name type="scientific">Pseudomonas fluorescens (strain SBW25)</name>
    <dbReference type="NCBI Taxonomy" id="216595"/>
    <lineage>
        <taxon>Bacteria</taxon>
        <taxon>Pseudomonadati</taxon>
        <taxon>Pseudomonadota</taxon>
        <taxon>Gammaproteobacteria</taxon>
        <taxon>Pseudomonadales</taxon>
        <taxon>Pseudomonadaceae</taxon>
        <taxon>Pseudomonas</taxon>
    </lineage>
</organism>
<keyword id="KW-0378">Hydrolase</keyword>
<keyword id="KW-0441">Lipid A biosynthesis</keyword>
<keyword id="KW-0444">Lipid biosynthesis</keyword>
<keyword id="KW-0443">Lipid metabolism</keyword>
<keyword id="KW-0479">Metal-binding</keyword>
<keyword id="KW-0862">Zinc</keyword>
<name>LPXC_PSEFS</name>
<protein>
    <recommendedName>
        <fullName evidence="1">UDP-3-O-acyl-N-acetylglucosamine deacetylase</fullName>
        <shortName evidence="1">UDP-3-O-acyl-GlcNAc deacetylase</shortName>
        <ecNumber evidence="1">3.5.1.108</ecNumber>
    </recommendedName>
    <alternativeName>
        <fullName evidence="1">UDP-3-O-[R-3-hydroxymyristoyl]-N-acetylglucosamine deacetylase</fullName>
    </alternativeName>
</protein>
<gene>
    <name evidence="1" type="primary">lpxC</name>
    <name type="ordered locus">PFLU_0953</name>
</gene>
<sequence length="303" mass="33218">MIKQRTLKNIIRATGVGLHSGEKVYLTLKPAPVDTGIVFVRADLDPVVQIPARAENVGETTMSTTLVNGDVKVDTVEHLLSAMAGLGIDNAYVELSASEVPIMDGSAGPFVFLIQSAGLEEQDAAKKFIRILREVTVEDGDKRATFVPFEGFKVSFEIDFDHPVFRDRTQSASVDFSSTSFVKEVSRARTFGFMSDIEYLRKHNLALGGSVENAIVVDADGVLNEDGLRYEDEFVKHKILDAIGDLYLLGNSLIGEFKGFKSGHALNNQLLRKLIEQTDAWEVVTFEDASTAPISYMRPVAAV</sequence>
<accession>C3KDE0</accession>
<feature type="chain" id="PRO_1000205807" description="UDP-3-O-acyl-N-acetylglucosamine deacetylase">
    <location>
        <begin position="1"/>
        <end position="303"/>
    </location>
</feature>
<feature type="active site" description="Proton donor" evidence="1">
    <location>
        <position position="264"/>
    </location>
</feature>
<feature type="binding site" evidence="1">
    <location>
        <position position="78"/>
    </location>
    <ligand>
        <name>Zn(2+)</name>
        <dbReference type="ChEBI" id="CHEBI:29105"/>
    </ligand>
</feature>
<feature type="binding site" evidence="1">
    <location>
        <position position="237"/>
    </location>
    <ligand>
        <name>Zn(2+)</name>
        <dbReference type="ChEBI" id="CHEBI:29105"/>
    </ligand>
</feature>
<feature type="binding site" evidence="1">
    <location>
        <position position="241"/>
    </location>
    <ligand>
        <name>Zn(2+)</name>
        <dbReference type="ChEBI" id="CHEBI:29105"/>
    </ligand>
</feature>
<reference key="1">
    <citation type="journal article" date="2009" name="Genome Biol.">
        <title>Genomic and genetic analyses of diversity and plant interactions of Pseudomonas fluorescens.</title>
        <authorList>
            <person name="Silby M.W."/>
            <person name="Cerdeno-Tarraga A.M."/>
            <person name="Vernikos G.S."/>
            <person name="Giddens S.R."/>
            <person name="Jackson R.W."/>
            <person name="Preston G.M."/>
            <person name="Zhang X.-X."/>
            <person name="Moon C.D."/>
            <person name="Gehrig S.M."/>
            <person name="Godfrey S.A.C."/>
            <person name="Knight C.G."/>
            <person name="Malone J.G."/>
            <person name="Robinson Z."/>
            <person name="Spiers A.J."/>
            <person name="Harris S."/>
            <person name="Challis G.L."/>
            <person name="Yaxley A.M."/>
            <person name="Harris D."/>
            <person name="Seeger K."/>
            <person name="Murphy L."/>
            <person name="Rutter S."/>
            <person name="Squares R."/>
            <person name="Quail M.A."/>
            <person name="Saunders E."/>
            <person name="Mavromatis K."/>
            <person name="Brettin T.S."/>
            <person name="Bentley S.D."/>
            <person name="Hothersall J."/>
            <person name="Stephens E."/>
            <person name="Thomas C.M."/>
            <person name="Parkhill J."/>
            <person name="Levy S.B."/>
            <person name="Rainey P.B."/>
            <person name="Thomson N.R."/>
        </authorList>
    </citation>
    <scope>NUCLEOTIDE SEQUENCE [LARGE SCALE GENOMIC DNA]</scope>
    <source>
        <strain>SBW25</strain>
    </source>
</reference>
<dbReference type="EC" id="3.5.1.108" evidence="1"/>
<dbReference type="EMBL" id="AM181176">
    <property type="protein sequence ID" value="CAY47219.1"/>
    <property type="molecule type" value="Genomic_DNA"/>
</dbReference>
<dbReference type="RefSeq" id="WP_003171886.1">
    <property type="nucleotide sequence ID" value="NC_012660.1"/>
</dbReference>
<dbReference type="SMR" id="C3KDE0"/>
<dbReference type="STRING" id="294.SRM1_04715"/>
<dbReference type="GeneID" id="97923440"/>
<dbReference type="eggNOG" id="COG0774">
    <property type="taxonomic scope" value="Bacteria"/>
</dbReference>
<dbReference type="HOGENOM" id="CLU_046528_1_0_6"/>
<dbReference type="OrthoDB" id="9802746at2"/>
<dbReference type="UniPathway" id="UPA00359">
    <property type="reaction ID" value="UER00478"/>
</dbReference>
<dbReference type="GO" id="GO:0016020">
    <property type="term" value="C:membrane"/>
    <property type="evidence" value="ECO:0007669"/>
    <property type="project" value="GOC"/>
</dbReference>
<dbReference type="GO" id="GO:0046872">
    <property type="term" value="F:metal ion binding"/>
    <property type="evidence" value="ECO:0007669"/>
    <property type="project" value="UniProtKB-KW"/>
</dbReference>
<dbReference type="GO" id="GO:0103117">
    <property type="term" value="F:UDP-3-O-acyl-N-acetylglucosamine deacetylase activity"/>
    <property type="evidence" value="ECO:0007669"/>
    <property type="project" value="UniProtKB-UniRule"/>
</dbReference>
<dbReference type="GO" id="GO:0009245">
    <property type="term" value="P:lipid A biosynthetic process"/>
    <property type="evidence" value="ECO:0007669"/>
    <property type="project" value="UniProtKB-UniRule"/>
</dbReference>
<dbReference type="FunFam" id="3.30.230.20:FF:000001">
    <property type="entry name" value="UDP-3-O-acyl-N-acetylglucosamine deacetylase"/>
    <property type="match status" value="1"/>
</dbReference>
<dbReference type="Gene3D" id="3.30.230.20">
    <property type="entry name" value="lpxc deacetylase, domain 1"/>
    <property type="match status" value="1"/>
</dbReference>
<dbReference type="Gene3D" id="3.30.1700.10">
    <property type="entry name" value="lpxc deacetylase, domain 2"/>
    <property type="match status" value="1"/>
</dbReference>
<dbReference type="HAMAP" id="MF_00388">
    <property type="entry name" value="LpxC"/>
    <property type="match status" value="1"/>
</dbReference>
<dbReference type="InterPro" id="IPR020568">
    <property type="entry name" value="Ribosomal_Su5_D2-typ_SF"/>
</dbReference>
<dbReference type="InterPro" id="IPR004463">
    <property type="entry name" value="UDP-acyl_GlcNac_deAcase"/>
</dbReference>
<dbReference type="InterPro" id="IPR011334">
    <property type="entry name" value="UDP-acyl_GlcNac_deAcase_C"/>
</dbReference>
<dbReference type="InterPro" id="IPR015870">
    <property type="entry name" value="UDP-acyl_N-AcGlcN_deAcase_N"/>
</dbReference>
<dbReference type="NCBIfam" id="TIGR00325">
    <property type="entry name" value="lpxC"/>
    <property type="match status" value="1"/>
</dbReference>
<dbReference type="PANTHER" id="PTHR33694">
    <property type="entry name" value="UDP-3-O-ACYL-N-ACETYLGLUCOSAMINE DEACETYLASE 1, MITOCHONDRIAL-RELATED"/>
    <property type="match status" value="1"/>
</dbReference>
<dbReference type="PANTHER" id="PTHR33694:SF1">
    <property type="entry name" value="UDP-3-O-ACYL-N-ACETYLGLUCOSAMINE DEACETYLASE 1, MITOCHONDRIAL-RELATED"/>
    <property type="match status" value="1"/>
</dbReference>
<dbReference type="Pfam" id="PF03331">
    <property type="entry name" value="LpxC"/>
    <property type="match status" value="1"/>
</dbReference>
<dbReference type="SUPFAM" id="SSF54211">
    <property type="entry name" value="Ribosomal protein S5 domain 2-like"/>
    <property type="match status" value="2"/>
</dbReference>
<comment type="function">
    <text evidence="1">Catalyzes the hydrolysis of UDP-3-O-myristoyl-N-acetylglucosamine to form UDP-3-O-myristoylglucosamine and acetate, the committed step in lipid A biosynthesis.</text>
</comment>
<comment type="catalytic activity">
    <reaction evidence="1">
        <text>a UDP-3-O-[(3R)-3-hydroxyacyl]-N-acetyl-alpha-D-glucosamine + H2O = a UDP-3-O-[(3R)-3-hydroxyacyl]-alpha-D-glucosamine + acetate</text>
        <dbReference type="Rhea" id="RHEA:67816"/>
        <dbReference type="ChEBI" id="CHEBI:15377"/>
        <dbReference type="ChEBI" id="CHEBI:30089"/>
        <dbReference type="ChEBI" id="CHEBI:137740"/>
        <dbReference type="ChEBI" id="CHEBI:173225"/>
        <dbReference type="EC" id="3.5.1.108"/>
    </reaction>
</comment>
<comment type="cofactor">
    <cofactor evidence="1">
        <name>Zn(2+)</name>
        <dbReference type="ChEBI" id="CHEBI:29105"/>
    </cofactor>
</comment>
<comment type="pathway">
    <text evidence="1">Glycolipid biosynthesis; lipid IV(A) biosynthesis; lipid IV(A) from (3R)-3-hydroxytetradecanoyl-[acyl-carrier-protein] and UDP-N-acetyl-alpha-D-glucosamine: step 2/6.</text>
</comment>
<comment type="similarity">
    <text evidence="1">Belongs to the LpxC family.</text>
</comment>
<proteinExistence type="inferred from homology"/>
<evidence type="ECO:0000255" key="1">
    <source>
        <dbReference type="HAMAP-Rule" id="MF_00388"/>
    </source>
</evidence>